<protein>
    <recommendedName>
        <fullName evidence="1">Putative pterin-4-alpha-carbinolamine dehydratase</fullName>
        <shortName evidence="1">PHS</shortName>
        <ecNumber evidence="1">4.2.1.96</ecNumber>
    </recommendedName>
    <alternativeName>
        <fullName evidence="1">4-alpha-hydroxy-tetrahydropterin dehydratase</fullName>
    </alternativeName>
    <alternativeName>
        <fullName evidence="1">Pterin carbinolamine dehydratase</fullName>
        <shortName evidence="1">PCD</shortName>
    </alternativeName>
</protein>
<sequence>MIAMPTLLSADQRQTLPATLPHWTVHEQSISRELVFNDFNEAFGFMSRVALLAEGRNHHPNWSNVYNRVSITLSTHDLGGLSDLDVELAAAIDQLLPA</sequence>
<name>PHS_PARMW</name>
<feature type="chain" id="PRO_0000063099" description="Putative pterin-4-alpha-carbinolamine dehydratase">
    <location>
        <begin position="1"/>
        <end position="98"/>
    </location>
</feature>
<organism>
    <name type="scientific">Parasynechococcus marenigrum (strain WH8102)</name>
    <dbReference type="NCBI Taxonomy" id="84588"/>
    <lineage>
        <taxon>Bacteria</taxon>
        <taxon>Bacillati</taxon>
        <taxon>Cyanobacteriota</taxon>
        <taxon>Cyanophyceae</taxon>
        <taxon>Synechococcales</taxon>
        <taxon>Prochlorococcaceae</taxon>
        <taxon>Parasynechococcus</taxon>
        <taxon>Parasynechococcus marenigrum</taxon>
    </lineage>
</organism>
<proteinExistence type="inferred from homology"/>
<dbReference type="EC" id="4.2.1.96" evidence="1"/>
<dbReference type="EMBL" id="BX569693">
    <property type="protein sequence ID" value="CAE08309.1"/>
    <property type="molecule type" value="Genomic_DNA"/>
</dbReference>
<dbReference type="RefSeq" id="WP_011128654.1">
    <property type="nucleotide sequence ID" value="NC_005070.1"/>
</dbReference>
<dbReference type="SMR" id="Q7U5B3"/>
<dbReference type="STRING" id="84588.SYNW1794"/>
<dbReference type="KEGG" id="syw:SYNW1794"/>
<dbReference type="eggNOG" id="COG2154">
    <property type="taxonomic scope" value="Bacteria"/>
</dbReference>
<dbReference type="HOGENOM" id="CLU_081974_3_2_3"/>
<dbReference type="Proteomes" id="UP000001422">
    <property type="component" value="Chromosome"/>
</dbReference>
<dbReference type="GO" id="GO:0008124">
    <property type="term" value="F:4-alpha-hydroxytetrahydrobiopterin dehydratase activity"/>
    <property type="evidence" value="ECO:0007669"/>
    <property type="project" value="UniProtKB-UniRule"/>
</dbReference>
<dbReference type="GO" id="GO:0006729">
    <property type="term" value="P:tetrahydrobiopterin biosynthetic process"/>
    <property type="evidence" value="ECO:0007669"/>
    <property type="project" value="InterPro"/>
</dbReference>
<dbReference type="CDD" id="cd00914">
    <property type="entry name" value="PCD_DCoH_subfamily_b"/>
    <property type="match status" value="1"/>
</dbReference>
<dbReference type="Gene3D" id="3.30.1360.20">
    <property type="entry name" value="Transcriptional coactivator/pterin dehydratase"/>
    <property type="match status" value="1"/>
</dbReference>
<dbReference type="HAMAP" id="MF_00434">
    <property type="entry name" value="Pterin_4_alpha"/>
    <property type="match status" value="1"/>
</dbReference>
<dbReference type="InterPro" id="IPR036428">
    <property type="entry name" value="PCD_sf"/>
</dbReference>
<dbReference type="InterPro" id="IPR001533">
    <property type="entry name" value="Pterin_deHydtase"/>
</dbReference>
<dbReference type="NCBIfam" id="NF002017">
    <property type="entry name" value="PRK00823.1-2"/>
    <property type="match status" value="1"/>
</dbReference>
<dbReference type="NCBIfam" id="NF002018">
    <property type="entry name" value="PRK00823.1-3"/>
    <property type="match status" value="1"/>
</dbReference>
<dbReference type="PANTHER" id="PTHR12599">
    <property type="entry name" value="PTERIN-4-ALPHA-CARBINOLAMINE DEHYDRATASE"/>
    <property type="match status" value="1"/>
</dbReference>
<dbReference type="PANTHER" id="PTHR12599:SF0">
    <property type="entry name" value="PTERIN-4-ALPHA-CARBINOLAMINE DEHYDRATASE"/>
    <property type="match status" value="1"/>
</dbReference>
<dbReference type="Pfam" id="PF01329">
    <property type="entry name" value="Pterin_4a"/>
    <property type="match status" value="1"/>
</dbReference>
<dbReference type="SUPFAM" id="SSF55248">
    <property type="entry name" value="PCD-like"/>
    <property type="match status" value="1"/>
</dbReference>
<keyword id="KW-0456">Lyase</keyword>
<accession>Q7U5B3</accession>
<gene>
    <name type="ordered locus">SYNW1794</name>
</gene>
<reference key="1">
    <citation type="journal article" date="2003" name="Nature">
        <title>The genome of a motile marine Synechococcus.</title>
        <authorList>
            <person name="Palenik B."/>
            <person name="Brahamsha B."/>
            <person name="Larimer F.W."/>
            <person name="Land M.L."/>
            <person name="Hauser L."/>
            <person name="Chain P."/>
            <person name="Lamerdin J.E."/>
            <person name="Regala W."/>
            <person name="Allen E.E."/>
            <person name="McCarren J."/>
            <person name="Paulsen I.T."/>
            <person name="Dufresne A."/>
            <person name="Partensky F."/>
            <person name="Webb E.A."/>
            <person name="Waterbury J."/>
        </authorList>
    </citation>
    <scope>NUCLEOTIDE SEQUENCE [LARGE SCALE GENOMIC DNA]</scope>
    <source>
        <strain>WH8102</strain>
    </source>
</reference>
<comment type="catalytic activity">
    <reaction evidence="1">
        <text>(4aS,6R)-4a-hydroxy-L-erythro-5,6,7,8-tetrahydrobiopterin = (6R)-L-erythro-6,7-dihydrobiopterin + H2O</text>
        <dbReference type="Rhea" id="RHEA:11920"/>
        <dbReference type="ChEBI" id="CHEBI:15377"/>
        <dbReference type="ChEBI" id="CHEBI:15642"/>
        <dbReference type="ChEBI" id="CHEBI:43120"/>
        <dbReference type="EC" id="4.2.1.96"/>
    </reaction>
</comment>
<comment type="similarity">
    <text evidence="1">Belongs to the pterin-4-alpha-carbinolamine dehydratase family.</text>
</comment>
<evidence type="ECO:0000255" key="1">
    <source>
        <dbReference type="HAMAP-Rule" id="MF_00434"/>
    </source>
</evidence>